<sequence length="509" mass="54963">MDIRAAEISAILKEQIKNFGQEAEVTEVGQVLAVGDGIARVYGLDNVQAGEMVEFESGVRGMALNLEQDNVGVVIFGSDREIKEGQTVKRTGAIVDVPVGKGLLGRVVDGLGNPIDGKGPIQSTERRRVDVKAPGIIPRKSVHEPMATGLKAIDALIPVGRGQRELIIGDRQTGKTAIALDTILNQKPAHSGTDENAKLYCVYVAIGQKRSTVAQFVKVLEDQGALEYSIVIAATASDAAPMQFIAPFAGCAMGEYFRDNGMHAVIVYDDLSKQAVAYRQMSLLLRRPPGREAYPGDVFYLHSRLLERAAKMGDAAGKGSLTALPVIETQANDVSAYIPTNVISITDGQIFLETDLFYQGVRPAVNVGLSVSRVGSSAQTKAMKKVAGKIKGELAQYREMAAFAQFGSDLDASTQRLLNRGARLTELLKQPQFSPLKMEEQVAVIYAGVNGYLDKLPVNKVREFEDQLLGTLRSKHQDWLDSVRDSKDLSDANANTLKGVVESIAKSFA</sequence>
<protein>
    <recommendedName>
        <fullName evidence="1">ATP synthase subunit alpha</fullName>
        <ecNumber evidence="1">7.1.2.2</ecNumber>
    </recommendedName>
    <alternativeName>
        <fullName evidence="1">ATP synthase F1 sector subunit alpha</fullName>
    </alternativeName>
    <alternativeName>
        <fullName evidence="1">F-ATPase subunit alpha</fullName>
    </alternativeName>
</protein>
<dbReference type="EC" id="7.1.2.2" evidence="1"/>
<dbReference type="EMBL" id="CP001029">
    <property type="protein sequence ID" value="ACB79634.1"/>
    <property type="molecule type" value="Genomic_DNA"/>
</dbReference>
<dbReference type="RefSeq" id="WP_012453382.1">
    <property type="nucleotide sequence ID" value="NC_010725.1"/>
</dbReference>
<dbReference type="SMR" id="B1ZEE9"/>
<dbReference type="STRING" id="441620.Mpop_1467"/>
<dbReference type="KEGG" id="mpo:Mpop_1467"/>
<dbReference type="eggNOG" id="COG0056">
    <property type="taxonomic scope" value="Bacteria"/>
</dbReference>
<dbReference type="HOGENOM" id="CLU_010091_2_1_5"/>
<dbReference type="OrthoDB" id="9803053at2"/>
<dbReference type="Proteomes" id="UP000007136">
    <property type="component" value="Chromosome"/>
</dbReference>
<dbReference type="GO" id="GO:0005886">
    <property type="term" value="C:plasma membrane"/>
    <property type="evidence" value="ECO:0007669"/>
    <property type="project" value="UniProtKB-SubCell"/>
</dbReference>
<dbReference type="GO" id="GO:0045259">
    <property type="term" value="C:proton-transporting ATP synthase complex"/>
    <property type="evidence" value="ECO:0007669"/>
    <property type="project" value="UniProtKB-KW"/>
</dbReference>
<dbReference type="GO" id="GO:0043531">
    <property type="term" value="F:ADP binding"/>
    <property type="evidence" value="ECO:0007669"/>
    <property type="project" value="TreeGrafter"/>
</dbReference>
<dbReference type="GO" id="GO:0005524">
    <property type="term" value="F:ATP binding"/>
    <property type="evidence" value="ECO:0007669"/>
    <property type="project" value="UniProtKB-UniRule"/>
</dbReference>
<dbReference type="GO" id="GO:0046933">
    <property type="term" value="F:proton-transporting ATP synthase activity, rotational mechanism"/>
    <property type="evidence" value="ECO:0007669"/>
    <property type="project" value="UniProtKB-UniRule"/>
</dbReference>
<dbReference type="CDD" id="cd18113">
    <property type="entry name" value="ATP-synt_F1_alpha_C"/>
    <property type="match status" value="1"/>
</dbReference>
<dbReference type="CDD" id="cd18116">
    <property type="entry name" value="ATP-synt_F1_alpha_N"/>
    <property type="match status" value="1"/>
</dbReference>
<dbReference type="CDD" id="cd01132">
    <property type="entry name" value="F1-ATPase_alpha_CD"/>
    <property type="match status" value="1"/>
</dbReference>
<dbReference type="FunFam" id="1.20.150.20:FF:000001">
    <property type="entry name" value="ATP synthase subunit alpha"/>
    <property type="match status" value="1"/>
</dbReference>
<dbReference type="FunFam" id="2.40.30.20:FF:000001">
    <property type="entry name" value="ATP synthase subunit alpha"/>
    <property type="match status" value="1"/>
</dbReference>
<dbReference type="FunFam" id="3.40.50.300:FF:002432">
    <property type="entry name" value="ATP synthase subunit alpha, mitochondrial"/>
    <property type="match status" value="1"/>
</dbReference>
<dbReference type="Gene3D" id="2.40.30.20">
    <property type="match status" value="1"/>
</dbReference>
<dbReference type="Gene3D" id="1.20.150.20">
    <property type="entry name" value="ATP synthase alpha/beta chain, C-terminal domain"/>
    <property type="match status" value="1"/>
</dbReference>
<dbReference type="Gene3D" id="3.40.50.300">
    <property type="entry name" value="P-loop containing nucleotide triphosphate hydrolases"/>
    <property type="match status" value="1"/>
</dbReference>
<dbReference type="HAMAP" id="MF_01346">
    <property type="entry name" value="ATP_synth_alpha_bact"/>
    <property type="match status" value="1"/>
</dbReference>
<dbReference type="InterPro" id="IPR023366">
    <property type="entry name" value="ATP_synth_asu-like_sf"/>
</dbReference>
<dbReference type="InterPro" id="IPR000793">
    <property type="entry name" value="ATP_synth_asu_C"/>
</dbReference>
<dbReference type="InterPro" id="IPR038376">
    <property type="entry name" value="ATP_synth_asu_C_sf"/>
</dbReference>
<dbReference type="InterPro" id="IPR033732">
    <property type="entry name" value="ATP_synth_F1_a_nt-bd_dom"/>
</dbReference>
<dbReference type="InterPro" id="IPR005294">
    <property type="entry name" value="ATP_synth_F1_asu"/>
</dbReference>
<dbReference type="InterPro" id="IPR020003">
    <property type="entry name" value="ATPase_a/bsu_AS"/>
</dbReference>
<dbReference type="InterPro" id="IPR004100">
    <property type="entry name" value="ATPase_F1/V1/A1_a/bsu_N"/>
</dbReference>
<dbReference type="InterPro" id="IPR036121">
    <property type="entry name" value="ATPase_F1/V1/A1_a/bsu_N_sf"/>
</dbReference>
<dbReference type="InterPro" id="IPR000194">
    <property type="entry name" value="ATPase_F1/V1/A1_a/bsu_nucl-bd"/>
</dbReference>
<dbReference type="InterPro" id="IPR027417">
    <property type="entry name" value="P-loop_NTPase"/>
</dbReference>
<dbReference type="NCBIfam" id="TIGR00962">
    <property type="entry name" value="atpA"/>
    <property type="match status" value="1"/>
</dbReference>
<dbReference type="NCBIfam" id="NF009884">
    <property type="entry name" value="PRK13343.1"/>
    <property type="match status" value="1"/>
</dbReference>
<dbReference type="PANTHER" id="PTHR48082">
    <property type="entry name" value="ATP SYNTHASE SUBUNIT ALPHA, MITOCHONDRIAL"/>
    <property type="match status" value="1"/>
</dbReference>
<dbReference type="PANTHER" id="PTHR48082:SF2">
    <property type="entry name" value="ATP SYNTHASE SUBUNIT ALPHA, MITOCHONDRIAL"/>
    <property type="match status" value="1"/>
</dbReference>
<dbReference type="Pfam" id="PF00006">
    <property type="entry name" value="ATP-synt_ab"/>
    <property type="match status" value="1"/>
</dbReference>
<dbReference type="Pfam" id="PF00306">
    <property type="entry name" value="ATP-synt_ab_C"/>
    <property type="match status" value="1"/>
</dbReference>
<dbReference type="Pfam" id="PF02874">
    <property type="entry name" value="ATP-synt_ab_N"/>
    <property type="match status" value="1"/>
</dbReference>
<dbReference type="PIRSF" id="PIRSF039088">
    <property type="entry name" value="F_ATPase_subunit_alpha"/>
    <property type="match status" value="1"/>
</dbReference>
<dbReference type="SUPFAM" id="SSF47917">
    <property type="entry name" value="C-terminal domain of alpha and beta subunits of F1 ATP synthase"/>
    <property type="match status" value="1"/>
</dbReference>
<dbReference type="SUPFAM" id="SSF50615">
    <property type="entry name" value="N-terminal domain of alpha and beta subunits of F1 ATP synthase"/>
    <property type="match status" value="1"/>
</dbReference>
<dbReference type="SUPFAM" id="SSF52540">
    <property type="entry name" value="P-loop containing nucleoside triphosphate hydrolases"/>
    <property type="match status" value="1"/>
</dbReference>
<dbReference type="PROSITE" id="PS00152">
    <property type="entry name" value="ATPASE_ALPHA_BETA"/>
    <property type="match status" value="1"/>
</dbReference>
<comment type="function">
    <text evidence="1">Produces ATP from ADP in the presence of a proton gradient across the membrane. The alpha chain is a regulatory subunit.</text>
</comment>
<comment type="catalytic activity">
    <reaction evidence="1">
        <text>ATP + H2O + 4 H(+)(in) = ADP + phosphate + 5 H(+)(out)</text>
        <dbReference type="Rhea" id="RHEA:57720"/>
        <dbReference type="ChEBI" id="CHEBI:15377"/>
        <dbReference type="ChEBI" id="CHEBI:15378"/>
        <dbReference type="ChEBI" id="CHEBI:30616"/>
        <dbReference type="ChEBI" id="CHEBI:43474"/>
        <dbReference type="ChEBI" id="CHEBI:456216"/>
        <dbReference type="EC" id="7.1.2.2"/>
    </reaction>
</comment>
<comment type="subunit">
    <text evidence="1">F-type ATPases have 2 components, CF(1) - the catalytic core - and CF(0) - the membrane proton channel. CF(1) has five subunits: alpha(3), beta(3), gamma(1), delta(1), epsilon(1). CF(0) has three main subunits: a(1), b(2) and c(9-12). The alpha and beta chains form an alternating ring which encloses part of the gamma chain. CF(1) is attached to CF(0) by a central stalk formed by the gamma and epsilon chains, while a peripheral stalk is formed by the delta and b chains.</text>
</comment>
<comment type="subcellular location">
    <subcellularLocation>
        <location evidence="1">Cell inner membrane</location>
        <topology evidence="1">Peripheral membrane protein</topology>
    </subcellularLocation>
</comment>
<comment type="similarity">
    <text evidence="1">Belongs to the ATPase alpha/beta chains family.</text>
</comment>
<organism>
    <name type="scientific">Methylorubrum populi (strain ATCC BAA-705 / NCIMB 13946 / BJ001)</name>
    <name type="common">Methylobacterium populi</name>
    <dbReference type="NCBI Taxonomy" id="441620"/>
    <lineage>
        <taxon>Bacteria</taxon>
        <taxon>Pseudomonadati</taxon>
        <taxon>Pseudomonadota</taxon>
        <taxon>Alphaproteobacteria</taxon>
        <taxon>Hyphomicrobiales</taxon>
        <taxon>Methylobacteriaceae</taxon>
        <taxon>Methylorubrum</taxon>
    </lineage>
</organism>
<proteinExistence type="inferred from homology"/>
<evidence type="ECO:0000255" key="1">
    <source>
        <dbReference type="HAMAP-Rule" id="MF_01346"/>
    </source>
</evidence>
<name>ATPA_METPB</name>
<feature type="chain" id="PRO_1000143406" description="ATP synthase subunit alpha">
    <location>
        <begin position="1"/>
        <end position="509"/>
    </location>
</feature>
<feature type="binding site" evidence="1">
    <location>
        <begin position="169"/>
        <end position="176"/>
    </location>
    <ligand>
        <name>ATP</name>
        <dbReference type="ChEBI" id="CHEBI:30616"/>
    </ligand>
</feature>
<feature type="site" description="Required for activity" evidence="1">
    <location>
        <position position="370"/>
    </location>
</feature>
<reference key="1">
    <citation type="submission" date="2008-04" db="EMBL/GenBank/DDBJ databases">
        <title>Complete sequence of chromosome of Methylobacterium populi BJ001.</title>
        <authorList>
            <consortium name="US DOE Joint Genome Institute"/>
            <person name="Copeland A."/>
            <person name="Lucas S."/>
            <person name="Lapidus A."/>
            <person name="Glavina del Rio T."/>
            <person name="Dalin E."/>
            <person name="Tice H."/>
            <person name="Bruce D."/>
            <person name="Goodwin L."/>
            <person name="Pitluck S."/>
            <person name="Chertkov O."/>
            <person name="Brettin T."/>
            <person name="Detter J.C."/>
            <person name="Han C."/>
            <person name="Kuske C.R."/>
            <person name="Schmutz J."/>
            <person name="Larimer F."/>
            <person name="Land M."/>
            <person name="Hauser L."/>
            <person name="Kyrpides N."/>
            <person name="Mikhailova N."/>
            <person name="Marx C."/>
            <person name="Richardson P."/>
        </authorList>
    </citation>
    <scope>NUCLEOTIDE SEQUENCE [LARGE SCALE GENOMIC DNA]</scope>
    <source>
        <strain>ATCC BAA-705 / NCIMB 13946 / BJ001</strain>
    </source>
</reference>
<accession>B1ZEE9</accession>
<keyword id="KW-0066">ATP synthesis</keyword>
<keyword id="KW-0067">ATP-binding</keyword>
<keyword id="KW-0997">Cell inner membrane</keyword>
<keyword id="KW-1003">Cell membrane</keyword>
<keyword id="KW-0139">CF(1)</keyword>
<keyword id="KW-0375">Hydrogen ion transport</keyword>
<keyword id="KW-0406">Ion transport</keyword>
<keyword id="KW-0472">Membrane</keyword>
<keyword id="KW-0547">Nucleotide-binding</keyword>
<keyword id="KW-1278">Translocase</keyword>
<keyword id="KW-0813">Transport</keyword>
<gene>
    <name evidence="1" type="primary">atpA</name>
    <name type="ordered locus">Mpop_1467</name>
</gene>